<gene>
    <name type="ORF">268</name>
</gene>
<sequence length="268" mass="29884">MSVTYTSISSLLASPFQRLTSSMWNTATLLLYQLYETGGNSLTSILQNGNLYIPNNISALAGFFQKEVYVSGQPVLTEQDPIYIAGFIGTANQQINQILYSNQQLYYSISQLPKEISYDLYTNLYRTISDLTSTLSSQISQLQKTGINALYSIADFLAYTFTYFYLATVGLANTLNKLTLFLSPPTIEGLQISLSTIPSPIYNGSTIETVRIILQNLSNYIVYIGNKLYNSFPILPGDSLEFHVRNPSNVYAWATGKCTVYALFEVVQ</sequence>
<feature type="chain" id="PRO_0000342302" description="Uncharacterized protein 268">
    <location>
        <begin position="1"/>
        <end position="268"/>
    </location>
</feature>
<feature type="transmembrane region" description="Helical" evidence="1">
    <location>
        <begin position="150"/>
        <end position="172"/>
    </location>
</feature>
<organism>
    <name type="scientific">Sulfolobus islandicus rod-shaped virus 1</name>
    <name type="common">SIRV-1</name>
    <name type="synonym">Sulfolobus virus SIRV-1</name>
    <dbReference type="NCBI Taxonomy" id="157898"/>
    <lineage>
        <taxon>Viruses</taxon>
        <taxon>Adnaviria</taxon>
        <taxon>Zilligvirae</taxon>
        <taxon>Taleaviricota</taxon>
        <taxon>Tokiviricetes</taxon>
        <taxon>Ligamenvirales</taxon>
        <taxon>Rudiviridae</taxon>
        <taxon>Icerudivirus</taxon>
        <taxon>Icerudivirus SIRV1</taxon>
    </lineage>
</organism>
<keyword id="KW-1043">Host membrane</keyword>
<keyword id="KW-0472">Membrane</keyword>
<keyword id="KW-1185">Reference proteome</keyword>
<keyword id="KW-0812">Transmembrane</keyword>
<keyword id="KW-1133">Transmembrane helix</keyword>
<comment type="subcellular location">
    <subcellularLocation>
        <location evidence="2">Host membrane</location>
        <topology evidence="2">Single-pass membrane protein</topology>
    </subcellularLocation>
</comment>
<proteinExistence type="predicted"/>
<evidence type="ECO:0000255" key="1"/>
<evidence type="ECO:0000305" key="2"/>
<name>Y268_SIRV1</name>
<dbReference type="EMBL" id="AJ414696">
    <property type="protein sequence ID" value="CAC93989.1"/>
    <property type="molecule type" value="Genomic_DNA"/>
</dbReference>
<dbReference type="EMBL" id="AJ748296">
    <property type="protein sequence ID" value="CAG38853.1"/>
    <property type="molecule type" value="Genomic_DNA"/>
</dbReference>
<dbReference type="RefSeq" id="NP_666622.1">
    <property type="nucleotide sequence ID" value="NC_004087.1"/>
</dbReference>
<dbReference type="KEGG" id="vg:951357"/>
<dbReference type="OrthoDB" id="7433at10239"/>
<dbReference type="Proteomes" id="UP000002270">
    <property type="component" value="Genome"/>
</dbReference>
<dbReference type="Proteomes" id="UP000223181">
    <property type="component" value="Segment"/>
</dbReference>
<dbReference type="GO" id="GO:0033644">
    <property type="term" value="C:host cell membrane"/>
    <property type="evidence" value="ECO:0007669"/>
    <property type="project" value="UniProtKB-SubCell"/>
</dbReference>
<dbReference type="GO" id="GO:0016020">
    <property type="term" value="C:membrane"/>
    <property type="evidence" value="ECO:0007669"/>
    <property type="project" value="UniProtKB-KW"/>
</dbReference>
<protein>
    <recommendedName>
        <fullName>Uncharacterized protein 268</fullName>
    </recommendedName>
</protein>
<organismHost>
    <name type="scientific">Saccharolobus islandicus</name>
    <name type="common">Sulfolobus islandicus</name>
    <dbReference type="NCBI Taxonomy" id="43080"/>
</organismHost>
<accession>Q8QL22</accession>
<accession>Q5TJ85</accession>
<reference key="1">
    <citation type="journal article" date="2001" name="Virology">
        <title>Sequences and replication of genomes of the archaeal rudiviruses SIRV1 and SIRV2: relationships to the archaeal lipothrixvirus SIFV and some eukaryal viruses.</title>
        <authorList>
            <person name="Peng X."/>
            <person name="Blum H."/>
            <person name="She Q."/>
            <person name="Mallok S."/>
            <person name="Bruegger K."/>
            <person name="Garrett R.A."/>
            <person name="Zillig W."/>
            <person name="Prangishvili D."/>
        </authorList>
    </citation>
    <scope>NUCLEOTIDE SEQUENCE [LARGE SCALE GENOMIC DNA]</scope>
    <source>
        <strain>Isolate variant VIII</strain>
    </source>
</reference>
<reference key="2">
    <citation type="journal article" date="2004" name="Mol. Microbiol.">
        <title>Multiple variants of the archaeal DNA rudivirus SIRV1 in a single host and a novel mechanism of genomic variation.</title>
        <authorList>
            <person name="Peng X."/>
            <person name="Kessler A."/>
            <person name="Phan H."/>
            <person name="Garrett R.A."/>
            <person name="Prangishvili D."/>
        </authorList>
    </citation>
    <scope>NUCLEOTIDE SEQUENCE [LARGE SCALE GENOMIC DNA]</scope>
    <source>
        <strain>Isolate variant XX</strain>
    </source>
</reference>